<evidence type="ECO:0000269" key="1">
    <source ref="2"/>
</evidence>
<evidence type="ECO:0000305" key="2"/>
<evidence type="ECO:0000312" key="3">
    <source>
        <dbReference type="WormBase" id="F10E7.7"/>
    </source>
</evidence>
<feature type="initiator methionine" description="Removed" evidence="1">
    <location>
        <position position="1"/>
    </location>
</feature>
<feature type="chain" id="PRO_0000192803" description="Large ribosomal subunit protein eL33">
    <location>
        <begin position="2"/>
        <end position="124"/>
    </location>
</feature>
<feature type="modified residue" description="N-acetylalanine" evidence="1">
    <location>
        <position position="2"/>
    </location>
</feature>
<comment type="similarity">
    <text evidence="2">Belongs to the eukaryotic ribosomal protein eL33 family.</text>
</comment>
<reference key="1">
    <citation type="journal article" date="1998" name="Science">
        <title>Genome sequence of the nematode C. elegans: a platform for investigating biology.</title>
        <authorList>
            <consortium name="The C. elegans sequencing consortium"/>
        </authorList>
    </citation>
    <scope>NUCLEOTIDE SEQUENCE [LARGE SCALE GENOMIC DNA]</scope>
    <source>
        <strain>Bristol N2</strain>
    </source>
</reference>
<reference key="2">
    <citation type="submission" date="2005-09" db="UniProtKB">
        <authorList>
            <person name="Bienvenut W.V."/>
        </authorList>
    </citation>
    <scope>PROTEIN SEQUENCE OF 2-8; 22-28; 50-58 AND 60-65</scope>
    <scope>IDENTIFICATION BY MASS SPECTROMETRY</scope>
    <scope>ACETYLATION AT ALA-2</scope>
</reference>
<protein>
    <recommendedName>
        <fullName evidence="2">Large ribosomal subunit protein eL33</fullName>
    </recommendedName>
    <alternativeName>
        <fullName>60S ribosomal protein L35a</fullName>
    </alternativeName>
</protein>
<sequence>MADTAVARRPSAPTTGRLYVKAIFTGFKRGLRTQSEHTSLLKLEGVFNKEDAGFYAGKRVVYLYKAHNKTLKTGHTVATRTRAIWGKITRPHGNAGAVRAKFHHNIPPSALGKRIRVLLYPSNI</sequence>
<organism>
    <name type="scientific">Caenorhabditis elegans</name>
    <dbReference type="NCBI Taxonomy" id="6239"/>
    <lineage>
        <taxon>Eukaryota</taxon>
        <taxon>Metazoa</taxon>
        <taxon>Ecdysozoa</taxon>
        <taxon>Nematoda</taxon>
        <taxon>Chromadorea</taxon>
        <taxon>Rhabditida</taxon>
        <taxon>Rhabditina</taxon>
        <taxon>Rhabditomorpha</taxon>
        <taxon>Rhabditoidea</taxon>
        <taxon>Rhabditidae</taxon>
        <taxon>Peloderinae</taxon>
        <taxon>Caenorhabditis</taxon>
    </lineage>
</organism>
<accession>P49180</accession>
<keyword id="KW-0002">3D-structure</keyword>
<keyword id="KW-0007">Acetylation</keyword>
<keyword id="KW-0903">Direct protein sequencing</keyword>
<keyword id="KW-1185">Reference proteome</keyword>
<keyword id="KW-0687">Ribonucleoprotein</keyword>
<keyword id="KW-0689">Ribosomal protein</keyword>
<dbReference type="EMBL" id="FO081111">
    <property type="protein sequence ID" value="CCD69169.1"/>
    <property type="molecule type" value="Genomic_DNA"/>
</dbReference>
<dbReference type="PIR" id="T34207">
    <property type="entry name" value="T34207"/>
</dbReference>
<dbReference type="RefSeq" id="NP_495468.1">
    <property type="nucleotide sequence ID" value="NM_063067.7"/>
</dbReference>
<dbReference type="PDB" id="9BH5">
    <property type="method" value="EM"/>
    <property type="resolution" value="2.63 A"/>
    <property type="chains" value="Cf=1-124"/>
</dbReference>
<dbReference type="PDB" id="9CAI">
    <property type="method" value="EM"/>
    <property type="resolution" value="2.59 A"/>
    <property type="chains" value="Cf=1-124"/>
</dbReference>
<dbReference type="PDBsum" id="9BH5"/>
<dbReference type="PDBsum" id="9CAI"/>
<dbReference type="EMDB" id="EMD-44533"/>
<dbReference type="EMDB" id="EMD-45392"/>
<dbReference type="SMR" id="P49180"/>
<dbReference type="BioGRID" id="39502">
    <property type="interactions" value="87"/>
</dbReference>
<dbReference type="FunCoup" id="P49180">
    <property type="interactions" value="1411"/>
</dbReference>
<dbReference type="STRING" id="6239.F10E7.7.3"/>
<dbReference type="iPTMnet" id="P49180"/>
<dbReference type="PaxDb" id="6239-F10E7.7.2"/>
<dbReference type="PeptideAtlas" id="P49180"/>
<dbReference type="EnsemblMetazoa" id="F10E7.7.1">
    <property type="protein sequence ID" value="F10E7.7.1"/>
    <property type="gene ID" value="WBGene00004447"/>
</dbReference>
<dbReference type="EnsemblMetazoa" id="F10E7.7.2">
    <property type="protein sequence ID" value="F10E7.7.2"/>
    <property type="gene ID" value="WBGene00004447"/>
</dbReference>
<dbReference type="GeneID" id="174166"/>
<dbReference type="KEGG" id="cel:CELE_F10E7.7"/>
<dbReference type="UCSC" id="F10E7.7.1">
    <property type="organism name" value="c. elegans"/>
</dbReference>
<dbReference type="AGR" id="WB:WBGene00004447"/>
<dbReference type="CTD" id="174166"/>
<dbReference type="WormBase" id="F10E7.7">
    <property type="protein sequence ID" value="CE04362"/>
    <property type="gene ID" value="WBGene00004447"/>
    <property type="gene designation" value="rpl-35A"/>
</dbReference>
<dbReference type="eggNOG" id="KOG0887">
    <property type="taxonomic scope" value="Eukaryota"/>
</dbReference>
<dbReference type="GeneTree" id="ENSGT00390000016972"/>
<dbReference type="HOGENOM" id="CLU_100745_1_1_1"/>
<dbReference type="InParanoid" id="P49180"/>
<dbReference type="OMA" id="YRTNKHH"/>
<dbReference type="OrthoDB" id="1166329at2759"/>
<dbReference type="PhylomeDB" id="P49180"/>
<dbReference type="Reactome" id="R-CEL-156827">
    <property type="pathway name" value="L13a-mediated translational silencing of Ceruloplasmin expression"/>
</dbReference>
<dbReference type="Reactome" id="R-CEL-1799339">
    <property type="pathway name" value="SRP-dependent cotranslational protein targeting to membrane"/>
</dbReference>
<dbReference type="Reactome" id="R-CEL-72689">
    <property type="pathway name" value="Formation of a pool of free 40S subunits"/>
</dbReference>
<dbReference type="Reactome" id="R-CEL-72706">
    <property type="pathway name" value="GTP hydrolysis and joining of the 60S ribosomal subunit"/>
</dbReference>
<dbReference type="Reactome" id="R-CEL-975956">
    <property type="pathway name" value="Nonsense Mediated Decay (NMD) independent of the Exon Junction Complex (EJC)"/>
</dbReference>
<dbReference type="Reactome" id="R-CEL-975957">
    <property type="pathway name" value="Nonsense Mediated Decay (NMD) enhanced by the Exon Junction Complex (EJC)"/>
</dbReference>
<dbReference type="PRO" id="PR:P49180"/>
<dbReference type="Proteomes" id="UP000001940">
    <property type="component" value="Chromosome II"/>
</dbReference>
<dbReference type="Bgee" id="WBGene00004447">
    <property type="expression patterns" value="Expressed in germ line (C elegans) and 4 other cell types or tissues"/>
</dbReference>
<dbReference type="GO" id="GO:0022625">
    <property type="term" value="C:cytosolic large ribosomal subunit"/>
    <property type="evidence" value="ECO:0000318"/>
    <property type="project" value="GO_Central"/>
</dbReference>
<dbReference type="GO" id="GO:0003735">
    <property type="term" value="F:structural constituent of ribosome"/>
    <property type="evidence" value="ECO:0000318"/>
    <property type="project" value="GO_Central"/>
</dbReference>
<dbReference type="GO" id="GO:0002181">
    <property type="term" value="P:cytoplasmic translation"/>
    <property type="evidence" value="ECO:0000318"/>
    <property type="project" value="GO_Central"/>
</dbReference>
<dbReference type="GO" id="GO:0042273">
    <property type="term" value="P:ribosomal large subunit biogenesis"/>
    <property type="evidence" value="ECO:0000318"/>
    <property type="project" value="GO_Central"/>
</dbReference>
<dbReference type="FunFam" id="2.40.10.190:FF:000001">
    <property type="entry name" value="60S ribosomal protein L35a"/>
    <property type="match status" value="1"/>
</dbReference>
<dbReference type="Gene3D" id="2.40.10.190">
    <property type="entry name" value="translation elongation factor selb, chain A, domain 4"/>
    <property type="match status" value="1"/>
</dbReference>
<dbReference type="HAMAP" id="MF_00573">
    <property type="entry name" value="Ribosomal_eL33"/>
    <property type="match status" value="1"/>
</dbReference>
<dbReference type="InterPro" id="IPR001780">
    <property type="entry name" value="Ribosomal_eL33"/>
</dbReference>
<dbReference type="InterPro" id="IPR018266">
    <property type="entry name" value="Ribosomal_eL33_CS"/>
</dbReference>
<dbReference type="InterPro" id="IPR038661">
    <property type="entry name" value="Ribosomal_eL33_sf"/>
</dbReference>
<dbReference type="InterPro" id="IPR009000">
    <property type="entry name" value="Transl_B-barrel_sf"/>
</dbReference>
<dbReference type="PANTHER" id="PTHR10902">
    <property type="entry name" value="60S RIBOSOMAL PROTEIN L35A"/>
    <property type="match status" value="1"/>
</dbReference>
<dbReference type="Pfam" id="PF01247">
    <property type="entry name" value="Ribosomal_L35Ae"/>
    <property type="match status" value="1"/>
</dbReference>
<dbReference type="SUPFAM" id="SSF50447">
    <property type="entry name" value="Translation proteins"/>
    <property type="match status" value="1"/>
</dbReference>
<dbReference type="PROSITE" id="PS01105">
    <property type="entry name" value="RIBOSOMAL_L35AE"/>
    <property type="match status" value="1"/>
</dbReference>
<name>RL35A_CAEEL</name>
<gene>
    <name evidence="3" type="primary">rpl-35A</name>
    <name evidence="3" type="synonym">rpl-33</name>
    <name type="ORF">F10E7.7</name>
</gene>
<proteinExistence type="evidence at protein level"/>